<proteinExistence type="evidence at transcript level"/>
<evidence type="ECO:0000250" key="1"/>
<evidence type="ECO:0000250" key="2">
    <source>
        <dbReference type="UniProtKB" id="O55242"/>
    </source>
</evidence>
<evidence type="ECO:0000250" key="3">
    <source>
        <dbReference type="UniProtKB" id="Q5BJF2"/>
    </source>
</evidence>
<evidence type="ECO:0000250" key="4">
    <source>
        <dbReference type="UniProtKB" id="Q60492"/>
    </source>
</evidence>
<evidence type="ECO:0000250" key="5">
    <source>
        <dbReference type="UniProtKB" id="Q99720"/>
    </source>
</evidence>
<evidence type="ECO:0000305" key="6"/>
<organism>
    <name type="scientific">Gallus gallus</name>
    <name type="common">Chicken</name>
    <dbReference type="NCBI Taxonomy" id="9031"/>
    <lineage>
        <taxon>Eukaryota</taxon>
        <taxon>Metazoa</taxon>
        <taxon>Chordata</taxon>
        <taxon>Craniata</taxon>
        <taxon>Vertebrata</taxon>
        <taxon>Euteleostomi</taxon>
        <taxon>Archelosauria</taxon>
        <taxon>Archosauria</taxon>
        <taxon>Dinosauria</taxon>
        <taxon>Saurischia</taxon>
        <taxon>Theropoda</taxon>
        <taxon>Coelurosauria</taxon>
        <taxon>Aves</taxon>
        <taxon>Neognathae</taxon>
        <taxon>Galloanserae</taxon>
        <taxon>Galliformes</taxon>
        <taxon>Phasianidae</taxon>
        <taxon>Phasianinae</taxon>
        <taxon>Gallus</taxon>
    </lineage>
</organism>
<name>SGMR1_CHICK</name>
<accession>Q5ZL84</accession>
<reference key="1">
    <citation type="journal article" date="2005" name="Genome Biol.">
        <title>Full-length cDNAs from chicken bursal lymphocytes to facilitate gene function analysis.</title>
        <authorList>
            <person name="Caldwell R.B."/>
            <person name="Kierzek A.M."/>
            <person name="Arakawa H."/>
            <person name="Bezzubov Y."/>
            <person name="Zaim J."/>
            <person name="Fiedler P."/>
            <person name="Kutter S."/>
            <person name="Blagodatski A."/>
            <person name="Kostovska D."/>
            <person name="Koter M."/>
            <person name="Plachy J."/>
            <person name="Carninci P."/>
            <person name="Hayashizaki Y."/>
            <person name="Buerstedde J.-M."/>
        </authorList>
    </citation>
    <scope>NUCLEOTIDE SEQUENCE [LARGE SCALE MRNA]</scope>
    <source>
        <strain>CB</strain>
        <tissue>Bursa of Fabricius</tissue>
    </source>
</reference>
<keyword id="KW-0968">Cytoplasmic vesicle</keyword>
<keyword id="KW-0256">Endoplasmic reticulum</keyword>
<keyword id="KW-0445">Lipid transport</keyword>
<keyword id="KW-0472">Membrane</keyword>
<keyword id="KW-0539">Nucleus</keyword>
<keyword id="KW-0675">Receptor</keyword>
<keyword id="KW-1185">Reference proteome</keyword>
<keyword id="KW-0812">Transmembrane</keyword>
<keyword id="KW-1133">Transmembrane helix</keyword>
<keyword id="KW-0813">Transport</keyword>
<dbReference type="EMBL" id="AJ719850">
    <property type="protein sequence ID" value="CAG31509.1"/>
    <property type="molecule type" value="mRNA"/>
</dbReference>
<dbReference type="RefSeq" id="NP_001257486.3">
    <property type="nucleotide sequence ID" value="NM_001270557.4"/>
</dbReference>
<dbReference type="SMR" id="Q5ZL84"/>
<dbReference type="FunCoup" id="Q5ZL84">
    <property type="interactions" value="345"/>
</dbReference>
<dbReference type="STRING" id="9031.ENSGALP00000056917"/>
<dbReference type="PaxDb" id="9031-ENSGALP00000042968"/>
<dbReference type="Ensembl" id="ENSGALT00010025392.1">
    <property type="protein sequence ID" value="ENSGALP00010014359.1"/>
    <property type="gene ID" value="ENSGALG00010010671.1"/>
</dbReference>
<dbReference type="GeneID" id="100859748"/>
<dbReference type="KEGG" id="gga:100859748"/>
<dbReference type="CTD" id="10280"/>
<dbReference type="VEuPathDB" id="HostDB:geneid_100859748"/>
<dbReference type="eggNOG" id="KOG4143">
    <property type="taxonomic scope" value="Eukaryota"/>
</dbReference>
<dbReference type="GeneTree" id="ENSGT00390000012082"/>
<dbReference type="HOGENOM" id="CLU_085469_0_0_1"/>
<dbReference type="InParanoid" id="Q5ZL84"/>
<dbReference type="OrthoDB" id="347124at2759"/>
<dbReference type="PhylomeDB" id="Q5ZL84"/>
<dbReference type="PRO" id="PR:Q5ZL84"/>
<dbReference type="Proteomes" id="UP000000539">
    <property type="component" value="Chromosome Z"/>
</dbReference>
<dbReference type="Bgee" id="ENSGALG00000028996">
    <property type="expression patterns" value="Expressed in liver and 12 other cell types or tissues"/>
</dbReference>
<dbReference type="GO" id="GO:0031410">
    <property type="term" value="C:cytoplasmic vesicle"/>
    <property type="evidence" value="ECO:0007669"/>
    <property type="project" value="UniProtKB-KW"/>
</dbReference>
<dbReference type="GO" id="GO:0005783">
    <property type="term" value="C:endoplasmic reticulum"/>
    <property type="evidence" value="ECO:0000318"/>
    <property type="project" value="GO_Central"/>
</dbReference>
<dbReference type="GO" id="GO:0005789">
    <property type="term" value="C:endoplasmic reticulum membrane"/>
    <property type="evidence" value="ECO:0007669"/>
    <property type="project" value="UniProtKB-SubCell"/>
</dbReference>
<dbReference type="GO" id="GO:0016020">
    <property type="term" value="C:membrane"/>
    <property type="evidence" value="ECO:0000250"/>
    <property type="project" value="UniProtKB"/>
</dbReference>
<dbReference type="GO" id="GO:0005637">
    <property type="term" value="C:nuclear inner membrane"/>
    <property type="evidence" value="ECO:0007669"/>
    <property type="project" value="UniProtKB-SubCell"/>
</dbReference>
<dbReference type="GO" id="GO:0005640">
    <property type="term" value="C:nuclear outer membrane"/>
    <property type="evidence" value="ECO:0007669"/>
    <property type="project" value="UniProtKB-SubCell"/>
</dbReference>
<dbReference type="GO" id="GO:0006869">
    <property type="term" value="P:lipid transport"/>
    <property type="evidence" value="ECO:0007669"/>
    <property type="project" value="UniProtKB-KW"/>
</dbReference>
<dbReference type="GO" id="GO:0043523">
    <property type="term" value="P:regulation of neuron apoptotic process"/>
    <property type="evidence" value="ECO:0000250"/>
    <property type="project" value="UniProtKB"/>
</dbReference>
<dbReference type="InterPro" id="IPR006716">
    <property type="entry name" value="ERG2_sigma1_rcpt-like"/>
</dbReference>
<dbReference type="PANTHER" id="PTHR10868">
    <property type="entry name" value="SIGMA 1-TYPE OPIOID RECEPTOR-RELATED"/>
    <property type="match status" value="1"/>
</dbReference>
<dbReference type="PANTHER" id="PTHR10868:SF1">
    <property type="entry name" value="SIGMA NON-OPIOID INTRACELLULAR RECEPTOR 1"/>
    <property type="match status" value="1"/>
</dbReference>
<dbReference type="Pfam" id="PF04622">
    <property type="entry name" value="ERG2_Sigma1R"/>
    <property type="match status" value="1"/>
</dbReference>
<protein>
    <recommendedName>
        <fullName>Sigma non-opioid intracellular receptor 1</fullName>
    </recommendedName>
    <alternativeName>
        <fullName>Sigma 1-type opioid receptor</fullName>
        <shortName>Sigma1-receptor</shortName>
        <shortName>Sigma1R</shortName>
    </alternativeName>
</protein>
<feature type="chain" id="PRO_0000268657" description="Sigma non-opioid intracellular receptor 1">
    <location>
        <begin position="1"/>
        <end position="222"/>
    </location>
</feature>
<feature type="topological domain" description="Lumenal" evidence="5">
    <location>
        <begin position="1"/>
        <end position="7"/>
    </location>
</feature>
<feature type="transmembrane region" description="Helical" evidence="5">
    <location>
        <begin position="8"/>
        <end position="29"/>
    </location>
</feature>
<feature type="topological domain" description="Cytoplasmic" evidence="5">
    <location>
        <begin position="30"/>
        <end position="222"/>
    </location>
</feature>
<feature type="region of interest" description="Important for ligand-binding" evidence="4">
    <location>
        <begin position="98"/>
        <end position="105"/>
    </location>
</feature>
<feature type="region of interest" description="C-terminal hydrophobic region" evidence="6">
    <location>
        <begin position="176"/>
        <end position="222"/>
    </location>
</feature>
<feature type="site" description="Important for ligand binding" evidence="5">
    <location>
        <position position="125"/>
    </location>
</feature>
<feature type="site" description="Important for ligand binding" evidence="5">
    <location>
        <position position="171"/>
    </location>
</feature>
<sequence>MGVAGPWVLRVGLGLGAFALLLQGLRGWLACKRYEFQPAEIAELARHHAGLDHELAFSKIIVELRKKHPGHILPDEDLQWVFVNAGGWMGSMCLLHASLTEYVLLFGTAIDTGGHSGRYWAEIYDTIISGTFRQWKEGTTRSEIYYPGDTIVHQAGEATSVQWSAGTWMVEYGRGFVPSTLAFALADTLFSTQDFITLFYTLRAYTKGLLLEASAFFSTLGC</sequence>
<gene>
    <name type="primary">SIGMAR1</name>
    <name type="synonym">OPRS1</name>
    <name type="ORF">RCJMB04_7e2</name>
</gene>
<comment type="function">
    <text evidence="1">May function in lipid transport from the endoplasmic reticulum and be involved in a wide array of cellular functions probably through regulation of the biogenesis of lipid microdomains at the plasma membrane. May regulate calcium efflux at the endoplasmic reticulum (By similarity).</text>
</comment>
<comment type="subunit">
    <text evidence="5">Homotrimer (By similarity).</text>
</comment>
<comment type="subcellular location">
    <subcellularLocation>
        <location evidence="5">Nucleus inner membrane</location>
    </subcellularLocation>
    <subcellularLocation>
        <location evidence="5">Nucleus outer membrane</location>
    </subcellularLocation>
    <subcellularLocation>
        <location evidence="5">Nucleus envelope</location>
    </subcellularLocation>
    <subcellularLocation>
        <location evidence="5">Cytoplasmic vesicle</location>
    </subcellularLocation>
    <subcellularLocation>
        <location evidence="5">Endoplasmic reticulum membrane</location>
    </subcellularLocation>
    <subcellularLocation>
        <location evidence="5">Membrane</location>
        <topology evidence="5">Single-pass membrane protein</topology>
    </subcellularLocation>
    <text evidence="2 5">During interphase, detected at the inner and outer nuclear membrane and the endoplasmic reticulum. Detected on cytoplasmic vesicles during mitosis (By similarity). Targeted to lipid droplets, cholesterol and galactosylceramide-enriched domains of the endoplasmic reticulum (By similarity).</text>
</comment>
<comment type="domain">
    <text evidence="5">The C-terminal helices form a flat, hydrophobic surface that is probably tightly associated with the cytosolic surface of the endoplasmic reticulum membrane.</text>
</comment>
<comment type="miscellaneous">
    <text evidence="3">Sigma receptors are classified into two subtypes (Sigma-1 and Sigma-2) based on their different pharmacological profile.</text>
</comment>
<comment type="similarity">
    <text evidence="6">Belongs to the ERG2 family.</text>
</comment>